<gene>
    <name type="primary">hupA</name>
    <name type="ordered locus">BPSL0004</name>
</gene>
<feature type="chain" id="PRO_0000104927" description="DNA-binding protein HU-alpha">
    <location>
        <begin position="1"/>
        <end position="92"/>
    </location>
</feature>
<sequence length="92" mass="9621">MNKQELIDAVAAQTGASKAQTGETLDTLLEVIKKAVSKGDSVQLIGFGSFGSGKRAARTGRNPKTGETIKIPAAKTVKFTAGKAFKDAVNKR</sequence>
<organism>
    <name type="scientific">Burkholderia pseudomallei (strain K96243)</name>
    <dbReference type="NCBI Taxonomy" id="272560"/>
    <lineage>
        <taxon>Bacteria</taxon>
        <taxon>Pseudomonadati</taxon>
        <taxon>Pseudomonadota</taxon>
        <taxon>Betaproteobacteria</taxon>
        <taxon>Burkholderiales</taxon>
        <taxon>Burkholderiaceae</taxon>
        <taxon>Burkholderia</taxon>
        <taxon>pseudomallei group</taxon>
    </lineage>
</organism>
<keyword id="KW-0226">DNA condensation</keyword>
<keyword id="KW-0238">DNA-binding</keyword>
<keyword id="KW-1185">Reference proteome</keyword>
<name>DBHA_BURPS</name>
<dbReference type="EMBL" id="BX571965">
    <property type="protein sequence ID" value="CAH33987.1"/>
    <property type="molecule type" value="Genomic_DNA"/>
</dbReference>
<dbReference type="RefSeq" id="WP_004195781.1">
    <property type="nucleotide sequence ID" value="NZ_CP009538.1"/>
</dbReference>
<dbReference type="RefSeq" id="YP_106629.1">
    <property type="nucleotide sequence ID" value="NC_006350.1"/>
</dbReference>
<dbReference type="SMR" id="P0DMK4"/>
<dbReference type="STRING" id="272560.BPSL0004"/>
<dbReference type="KEGG" id="bps:BPSL0004"/>
<dbReference type="PATRIC" id="fig|272560.51.peg.1746"/>
<dbReference type="eggNOG" id="COG0776">
    <property type="taxonomic scope" value="Bacteria"/>
</dbReference>
<dbReference type="Proteomes" id="UP000000605">
    <property type="component" value="Chromosome 1"/>
</dbReference>
<dbReference type="GO" id="GO:0003677">
    <property type="term" value="F:DNA binding"/>
    <property type="evidence" value="ECO:0007669"/>
    <property type="project" value="UniProtKB-KW"/>
</dbReference>
<dbReference type="GO" id="GO:0030527">
    <property type="term" value="F:structural constituent of chromatin"/>
    <property type="evidence" value="ECO:0007669"/>
    <property type="project" value="InterPro"/>
</dbReference>
<dbReference type="GO" id="GO:0030261">
    <property type="term" value="P:chromosome condensation"/>
    <property type="evidence" value="ECO:0007669"/>
    <property type="project" value="UniProtKB-KW"/>
</dbReference>
<dbReference type="CDD" id="cd13831">
    <property type="entry name" value="HU"/>
    <property type="match status" value="1"/>
</dbReference>
<dbReference type="Gene3D" id="4.10.520.10">
    <property type="entry name" value="IHF-like DNA-binding proteins"/>
    <property type="match status" value="1"/>
</dbReference>
<dbReference type="InterPro" id="IPR000119">
    <property type="entry name" value="Hist_DNA-bd"/>
</dbReference>
<dbReference type="InterPro" id="IPR020816">
    <property type="entry name" value="Histone-like_DNA-bd_CS"/>
</dbReference>
<dbReference type="InterPro" id="IPR010992">
    <property type="entry name" value="IHF-like_DNA-bd_dom_sf"/>
</dbReference>
<dbReference type="PANTHER" id="PTHR33175">
    <property type="entry name" value="DNA-BINDING PROTEIN HU"/>
    <property type="match status" value="1"/>
</dbReference>
<dbReference type="PANTHER" id="PTHR33175:SF3">
    <property type="entry name" value="DNA-BINDING PROTEIN HU-BETA"/>
    <property type="match status" value="1"/>
</dbReference>
<dbReference type="Pfam" id="PF00216">
    <property type="entry name" value="Bac_DNA_binding"/>
    <property type="match status" value="1"/>
</dbReference>
<dbReference type="PRINTS" id="PR01727">
    <property type="entry name" value="DNABINDINGHU"/>
</dbReference>
<dbReference type="SMART" id="SM00411">
    <property type="entry name" value="BHL"/>
    <property type="match status" value="1"/>
</dbReference>
<dbReference type="SUPFAM" id="SSF47729">
    <property type="entry name" value="IHF-like DNA-binding proteins"/>
    <property type="match status" value="1"/>
</dbReference>
<dbReference type="PROSITE" id="PS00045">
    <property type="entry name" value="HISTONE_LIKE"/>
    <property type="match status" value="1"/>
</dbReference>
<protein>
    <recommendedName>
        <fullName>DNA-binding protein HU-alpha</fullName>
    </recommendedName>
</protein>
<accession>P0DMK4</accession>
<accession>Q63Z33</accession>
<accession>Q9ZF89</accession>
<proteinExistence type="inferred from homology"/>
<comment type="function">
    <text evidence="1">Histone-like DNA-binding protein which is capable of wrapping DNA to stabilize it, and thus to prevent its denaturation under extreme environmental conditions.</text>
</comment>
<comment type="subunit">
    <text evidence="1">Heterodimer of an alpha and a beta chain.</text>
</comment>
<comment type="similarity">
    <text evidence="2">Belongs to the bacterial histone-like protein family.</text>
</comment>
<evidence type="ECO:0000250" key="1"/>
<evidence type="ECO:0000305" key="2"/>
<reference key="1">
    <citation type="journal article" date="2004" name="Proc. Natl. Acad. Sci. U.S.A.">
        <title>Genomic plasticity of the causative agent of melioidosis, Burkholderia pseudomallei.</title>
        <authorList>
            <person name="Holden M.T.G."/>
            <person name="Titball R.W."/>
            <person name="Peacock S.J."/>
            <person name="Cerdeno-Tarraga A.-M."/>
            <person name="Atkins T."/>
            <person name="Crossman L.C."/>
            <person name="Pitt T."/>
            <person name="Churcher C."/>
            <person name="Mungall K.L."/>
            <person name="Bentley S.D."/>
            <person name="Sebaihia M."/>
            <person name="Thomson N.R."/>
            <person name="Bason N."/>
            <person name="Beacham I.R."/>
            <person name="Brooks K."/>
            <person name="Brown K.A."/>
            <person name="Brown N.F."/>
            <person name="Challis G.L."/>
            <person name="Cherevach I."/>
            <person name="Chillingworth T."/>
            <person name="Cronin A."/>
            <person name="Crossett B."/>
            <person name="Davis P."/>
            <person name="DeShazer D."/>
            <person name="Feltwell T."/>
            <person name="Fraser A."/>
            <person name="Hance Z."/>
            <person name="Hauser H."/>
            <person name="Holroyd S."/>
            <person name="Jagels K."/>
            <person name="Keith K.E."/>
            <person name="Maddison M."/>
            <person name="Moule S."/>
            <person name="Price C."/>
            <person name="Quail M.A."/>
            <person name="Rabbinowitsch E."/>
            <person name="Rutherford K."/>
            <person name="Sanders M."/>
            <person name="Simmonds M."/>
            <person name="Songsivilai S."/>
            <person name="Stevens K."/>
            <person name="Tumapa S."/>
            <person name="Vesaratchavest M."/>
            <person name="Whitehead S."/>
            <person name="Yeats C."/>
            <person name="Barrell B.G."/>
            <person name="Oyston P.C.F."/>
            <person name="Parkhill J."/>
        </authorList>
    </citation>
    <scope>NUCLEOTIDE SEQUENCE [LARGE SCALE GENOMIC DNA]</scope>
    <source>
        <strain>K96243</strain>
    </source>
</reference>